<proteinExistence type="inferred from homology"/>
<dbReference type="EC" id="3.5.1.88" evidence="1"/>
<dbReference type="EMBL" id="AE016879">
    <property type="protein sequence ID" value="AAP27909.1"/>
    <property type="molecule type" value="Genomic_DNA"/>
</dbReference>
<dbReference type="EMBL" id="AE017334">
    <property type="protein sequence ID" value="AAT33306.1"/>
    <property type="molecule type" value="Genomic_DNA"/>
</dbReference>
<dbReference type="EMBL" id="AE017225">
    <property type="protein sequence ID" value="AAT56185.1"/>
    <property type="molecule type" value="Genomic_DNA"/>
</dbReference>
<dbReference type="RefSeq" id="NP_846423.1">
    <property type="nucleotide sequence ID" value="NC_003997.3"/>
</dbReference>
<dbReference type="RefSeq" id="YP_030134.1">
    <property type="nucleotide sequence ID" value="NC_005945.1"/>
</dbReference>
<dbReference type="SMR" id="Q81MQ9"/>
<dbReference type="STRING" id="261594.GBAA_4187"/>
<dbReference type="DNASU" id="1088919"/>
<dbReference type="GeneID" id="45023862"/>
<dbReference type="KEGG" id="ban:BA_4187"/>
<dbReference type="KEGG" id="bar:GBAA_4187"/>
<dbReference type="KEGG" id="bat:BAS3884"/>
<dbReference type="PATRIC" id="fig|198094.11.peg.4156"/>
<dbReference type="eggNOG" id="COG0242">
    <property type="taxonomic scope" value="Bacteria"/>
</dbReference>
<dbReference type="HOGENOM" id="CLU_061901_4_0_9"/>
<dbReference type="OMA" id="HLYYDHI"/>
<dbReference type="OrthoDB" id="9784988at2"/>
<dbReference type="Proteomes" id="UP000000427">
    <property type="component" value="Chromosome"/>
</dbReference>
<dbReference type="Proteomes" id="UP000000594">
    <property type="component" value="Chromosome"/>
</dbReference>
<dbReference type="GO" id="GO:0046872">
    <property type="term" value="F:metal ion binding"/>
    <property type="evidence" value="ECO:0007669"/>
    <property type="project" value="UniProtKB-KW"/>
</dbReference>
<dbReference type="GO" id="GO:0042586">
    <property type="term" value="F:peptide deformylase activity"/>
    <property type="evidence" value="ECO:0007669"/>
    <property type="project" value="UniProtKB-UniRule"/>
</dbReference>
<dbReference type="GO" id="GO:0043686">
    <property type="term" value="P:co-translational protein modification"/>
    <property type="evidence" value="ECO:0007669"/>
    <property type="project" value="TreeGrafter"/>
</dbReference>
<dbReference type="GO" id="GO:0006412">
    <property type="term" value="P:translation"/>
    <property type="evidence" value="ECO:0007669"/>
    <property type="project" value="UniProtKB-UniRule"/>
</dbReference>
<dbReference type="CDD" id="cd00487">
    <property type="entry name" value="Pep_deformylase"/>
    <property type="match status" value="1"/>
</dbReference>
<dbReference type="FunFam" id="3.90.45.10:FF:000002">
    <property type="entry name" value="Peptide deformylase"/>
    <property type="match status" value="1"/>
</dbReference>
<dbReference type="Gene3D" id="3.90.45.10">
    <property type="entry name" value="Peptide deformylase"/>
    <property type="match status" value="1"/>
</dbReference>
<dbReference type="HAMAP" id="MF_00163">
    <property type="entry name" value="Pep_deformylase"/>
    <property type="match status" value="1"/>
</dbReference>
<dbReference type="InterPro" id="IPR023635">
    <property type="entry name" value="Peptide_deformylase"/>
</dbReference>
<dbReference type="InterPro" id="IPR036821">
    <property type="entry name" value="Peptide_deformylase_sf"/>
</dbReference>
<dbReference type="NCBIfam" id="TIGR00079">
    <property type="entry name" value="pept_deformyl"/>
    <property type="match status" value="1"/>
</dbReference>
<dbReference type="PANTHER" id="PTHR10458">
    <property type="entry name" value="PEPTIDE DEFORMYLASE"/>
    <property type="match status" value="1"/>
</dbReference>
<dbReference type="PANTHER" id="PTHR10458:SF8">
    <property type="entry name" value="PEPTIDE DEFORMYLASE 2"/>
    <property type="match status" value="1"/>
</dbReference>
<dbReference type="Pfam" id="PF01327">
    <property type="entry name" value="Pep_deformylase"/>
    <property type="match status" value="1"/>
</dbReference>
<dbReference type="PIRSF" id="PIRSF004749">
    <property type="entry name" value="Pep_def"/>
    <property type="match status" value="1"/>
</dbReference>
<dbReference type="PRINTS" id="PR01576">
    <property type="entry name" value="PDEFORMYLASE"/>
</dbReference>
<dbReference type="SUPFAM" id="SSF56420">
    <property type="entry name" value="Peptide deformylase"/>
    <property type="match status" value="1"/>
</dbReference>
<gene>
    <name evidence="1" type="primary">def2</name>
    <name type="ordered locus">BA_4187</name>
    <name type="ordered locus">GBAA_4187</name>
    <name type="ordered locus">BAS3884</name>
</gene>
<evidence type="ECO:0000255" key="1">
    <source>
        <dbReference type="HAMAP-Rule" id="MF_00163"/>
    </source>
</evidence>
<comment type="function">
    <text evidence="1">Removes the formyl group from the N-terminal Met of newly synthesized proteins. Requires at least a dipeptide for an efficient rate of reaction. N-terminal L-methionine is a prerequisite for activity but the enzyme has broad specificity at other positions.</text>
</comment>
<comment type="catalytic activity">
    <reaction evidence="1">
        <text>N-terminal N-formyl-L-methionyl-[peptide] + H2O = N-terminal L-methionyl-[peptide] + formate</text>
        <dbReference type="Rhea" id="RHEA:24420"/>
        <dbReference type="Rhea" id="RHEA-COMP:10639"/>
        <dbReference type="Rhea" id="RHEA-COMP:10640"/>
        <dbReference type="ChEBI" id="CHEBI:15377"/>
        <dbReference type="ChEBI" id="CHEBI:15740"/>
        <dbReference type="ChEBI" id="CHEBI:49298"/>
        <dbReference type="ChEBI" id="CHEBI:64731"/>
        <dbReference type="EC" id="3.5.1.88"/>
    </reaction>
</comment>
<comment type="cofactor">
    <cofactor evidence="1">
        <name>Fe(2+)</name>
        <dbReference type="ChEBI" id="CHEBI:29033"/>
    </cofactor>
    <text evidence="1">Binds 1 Fe(2+) ion.</text>
</comment>
<comment type="similarity">
    <text evidence="1">Belongs to the polypeptide deformylase family.</text>
</comment>
<reference key="1">
    <citation type="journal article" date="2003" name="Nature">
        <title>The genome sequence of Bacillus anthracis Ames and comparison to closely related bacteria.</title>
        <authorList>
            <person name="Read T.D."/>
            <person name="Peterson S.N."/>
            <person name="Tourasse N.J."/>
            <person name="Baillie L.W."/>
            <person name="Paulsen I.T."/>
            <person name="Nelson K.E."/>
            <person name="Tettelin H."/>
            <person name="Fouts D.E."/>
            <person name="Eisen J.A."/>
            <person name="Gill S.R."/>
            <person name="Holtzapple E.K."/>
            <person name="Okstad O.A."/>
            <person name="Helgason E."/>
            <person name="Rilstone J."/>
            <person name="Wu M."/>
            <person name="Kolonay J.F."/>
            <person name="Beanan M.J."/>
            <person name="Dodson R.J."/>
            <person name="Brinkac L.M."/>
            <person name="Gwinn M.L."/>
            <person name="DeBoy R.T."/>
            <person name="Madpu R."/>
            <person name="Daugherty S.C."/>
            <person name="Durkin A.S."/>
            <person name="Haft D.H."/>
            <person name="Nelson W.C."/>
            <person name="Peterson J.D."/>
            <person name="Pop M."/>
            <person name="Khouri H.M."/>
            <person name="Radune D."/>
            <person name="Benton J.L."/>
            <person name="Mahamoud Y."/>
            <person name="Jiang L."/>
            <person name="Hance I.R."/>
            <person name="Weidman J.F."/>
            <person name="Berry K.J."/>
            <person name="Plaut R.D."/>
            <person name="Wolf A.M."/>
            <person name="Watkins K.L."/>
            <person name="Nierman W.C."/>
            <person name="Hazen A."/>
            <person name="Cline R.T."/>
            <person name="Redmond C."/>
            <person name="Thwaite J.E."/>
            <person name="White O."/>
            <person name="Salzberg S.L."/>
            <person name="Thomason B."/>
            <person name="Friedlander A.M."/>
            <person name="Koehler T.M."/>
            <person name="Hanna P.C."/>
            <person name="Kolstoe A.-B."/>
            <person name="Fraser C.M."/>
        </authorList>
    </citation>
    <scope>NUCLEOTIDE SEQUENCE [LARGE SCALE GENOMIC DNA]</scope>
    <source>
        <strain>Ames / isolate Porton</strain>
    </source>
</reference>
<reference key="2">
    <citation type="journal article" date="2009" name="J. Bacteriol.">
        <title>The complete genome sequence of Bacillus anthracis Ames 'Ancestor'.</title>
        <authorList>
            <person name="Ravel J."/>
            <person name="Jiang L."/>
            <person name="Stanley S.T."/>
            <person name="Wilson M.R."/>
            <person name="Decker R.S."/>
            <person name="Read T.D."/>
            <person name="Worsham P."/>
            <person name="Keim P.S."/>
            <person name="Salzberg S.L."/>
            <person name="Fraser-Liggett C.M."/>
            <person name="Rasko D.A."/>
        </authorList>
    </citation>
    <scope>NUCLEOTIDE SEQUENCE [LARGE SCALE GENOMIC DNA]</scope>
    <source>
        <strain>Ames ancestor</strain>
    </source>
</reference>
<reference key="3">
    <citation type="submission" date="2004-01" db="EMBL/GenBank/DDBJ databases">
        <title>Complete genome sequence of Bacillus anthracis Sterne.</title>
        <authorList>
            <person name="Brettin T.S."/>
            <person name="Bruce D."/>
            <person name="Challacombe J.F."/>
            <person name="Gilna P."/>
            <person name="Han C."/>
            <person name="Hill K."/>
            <person name="Hitchcock P."/>
            <person name="Jackson P."/>
            <person name="Keim P."/>
            <person name="Longmire J."/>
            <person name="Lucas S."/>
            <person name="Okinaka R."/>
            <person name="Richardson P."/>
            <person name="Rubin E."/>
            <person name="Tice H."/>
        </authorList>
    </citation>
    <scope>NUCLEOTIDE SEQUENCE [LARGE SCALE GENOMIC DNA]</scope>
    <source>
        <strain>Sterne</strain>
    </source>
</reference>
<keyword id="KW-0378">Hydrolase</keyword>
<keyword id="KW-0408">Iron</keyword>
<keyword id="KW-0479">Metal-binding</keyword>
<keyword id="KW-0648">Protein biosynthesis</keyword>
<keyword id="KW-1185">Reference proteome</keyword>
<sequence>MLTMKDVIREGDPILRNVAEEVVIPASEEDTNTLKEMIEFVINSQDPEMAEKYSLRPGIGLAAPQIGISKKMIAVHVTDTDGTLYSHALFNPKIISHSVERTYLQSGEGCLSVDREVPGYVPRYTRITVKATSINGEEVKLRLKGLPAIVFQHEIDHLNGVMFYDHINKENPFAAPDGSKPLER</sequence>
<name>DEF2_BACAN</name>
<organism>
    <name type="scientific">Bacillus anthracis</name>
    <dbReference type="NCBI Taxonomy" id="1392"/>
    <lineage>
        <taxon>Bacteria</taxon>
        <taxon>Bacillati</taxon>
        <taxon>Bacillota</taxon>
        <taxon>Bacilli</taxon>
        <taxon>Bacillales</taxon>
        <taxon>Bacillaceae</taxon>
        <taxon>Bacillus</taxon>
        <taxon>Bacillus cereus group</taxon>
    </lineage>
</organism>
<protein>
    <recommendedName>
        <fullName evidence="1">Peptide deformylase 2</fullName>
        <shortName evidence="1">PDF 2</shortName>
        <ecNumber evidence="1">3.5.1.88</ecNumber>
    </recommendedName>
    <alternativeName>
        <fullName evidence="1">Polypeptide deformylase 2</fullName>
    </alternativeName>
</protein>
<feature type="chain" id="PRO_0000082734" description="Peptide deformylase 2">
    <location>
        <begin position="1"/>
        <end position="184"/>
    </location>
</feature>
<feature type="active site" evidence="1">
    <location>
        <position position="154"/>
    </location>
</feature>
<feature type="binding site" evidence="1">
    <location>
        <position position="110"/>
    </location>
    <ligand>
        <name>Fe cation</name>
        <dbReference type="ChEBI" id="CHEBI:24875"/>
    </ligand>
</feature>
<feature type="binding site" evidence="1">
    <location>
        <position position="153"/>
    </location>
    <ligand>
        <name>Fe cation</name>
        <dbReference type="ChEBI" id="CHEBI:24875"/>
    </ligand>
</feature>
<feature type="binding site" evidence="1">
    <location>
        <position position="157"/>
    </location>
    <ligand>
        <name>Fe cation</name>
        <dbReference type="ChEBI" id="CHEBI:24875"/>
    </ligand>
</feature>
<accession>Q81MQ9</accession>
<accession>Q6HU54</accession>
<accession>Q6KND7</accession>